<accession>Q8MKW7</accession>
<accession>Q8MRT4</accession>
<accession>Q9GZ73</accession>
<feature type="transit peptide" description="Mitochondrion" evidence="2">
    <location>
        <begin position="1"/>
        <end position="25"/>
    </location>
</feature>
<feature type="chain" id="PRO_0000030990" description="Ribonuclease Z, mitochondrial">
    <location>
        <begin position="26"/>
        <end position="766"/>
    </location>
</feature>
<feature type="sequence conflict" description="In Ref. 4; AAM51139." evidence="7" ref="4">
    <original>V</original>
    <variation>I</variation>
    <location>
        <position position="4"/>
    </location>
</feature>
<feature type="sequence conflict" description="In Ref. 2; AAM68783." evidence="7" ref="2">
    <original>G</original>
    <variation>R</variation>
    <location>
        <position position="8"/>
    </location>
</feature>
<feature type="sequence conflict" description="In Ref. 1; AAF99588." evidence="7" ref="1">
    <original>I</original>
    <variation>T</variation>
    <location>
        <position position="200"/>
    </location>
</feature>
<feature type="sequence conflict" description="In Ref. 1; AAF99588." evidence="7" ref="1">
    <original>V</original>
    <variation>A</variation>
    <location>
        <position position="259"/>
    </location>
</feature>
<feature type="sequence conflict" description="In Ref. 1; AAF99588." evidence="7" ref="1">
    <original>P</original>
    <variation>S</variation>
    <location>
        <position position="298"/>
    </location>
</feature>
<feature type="sequence conflict" description="In Ref. 1; AAF99588." evidence="7" ref="1">
    <original>V</original>
    <variation>E</variation>
    <location>
        <position position="306"/>
    </location>
</feature>
<feature type="sequence conflict" description="In Ref. 1; AAF99588." evidence="7" ref="1">
    <original>VESFSS</original>
    <variation>LENFSP</variation>
    <location>
        <begin position="312"/>
        <end position="317"/>
    </location>
</feature>
<feature type="sequence conflict" description="In Ref. 1; AAF99588." evidence="7" ref="1">
    <original>Y</original>
    <variation>N</variation>
    <location>
        <position position="402"/>
    </location>
</feature>
<feature type="sequence conflict" description="In Ref. 1; AAF99588." evidence="7" ref="1">
    <original>E</original>
    <variation>K</variation>
    <location>
        <position position="556"/>
    </location>
</feature>
<feature type="sequence conflict" description="In Ref. 2; AAM68783." evidence="7" ref="2">
    <original>T</original>
    <variation>S</variation>
    <location>
        <position position="690"/>
    </location>
</feature>
<feature type="sequence conflict" description="In Ref. 2; AAM68783." evidence="7" ref="2">
    <original>I</original>
    <variation>V</variation>
    <location>
        <position position="722"/>
    </location>
</feature>
<protein>
    <recommendedName>
        <fullName evidence="6">Ribonuclease Z, mitochondrial</fullName>
        <shortName evidence="6">RNase Z</shortName>
        <ecNumber>3.1.26.11</ecNumber>
    </recommendedName>
    <alternativeName>
        <fullName evidence="5">Juvenile hormone-inducible protein 1</fullName>
    </alternativeName>
    <alternativeName>
        <fullName>dRNAse Z</fullName>
    </alternativeName>
    <alternativeName>
        <fullName>tRNA 3 endonuclease</fullName>
        <shortName>DmeZ</shortName>
    </alternativeName>
    <alternativeName>
        <fullName>tRNase Z</fullName>
    </alternativeName>
</protein>
<reference key="1">
    <citation type="journal article" date="2000" name="Dev. Biol.">
        <title>The isolation of two juvenile hormone-inducible genes in Drosophila melanogaster.</title>
        <authorList>
            <person name="Dubrovsky E.B."/>
            <person name="Dubrovskaya V.A."/>
            <person name="Bilderback A.L."/>
            <person name="Berger E.M."/>
        </authorList>
    </citation>
    <scope>NUCLEOTIDE SEQUENCE</scope>
    <scope>INDUCTION</scope>
</reference>
<reference key="2">
    <citation type="journal article" date="2000" name="Science">
        <title>The genome sequence of Drosophila melanogaster.</title>
        <authorList>
            <person name="Adams M.D."/>
            <person name="Celniker S.E."/>
            <person name="Holt R.A."/>
            <person name="Evans C.A."/>
            <person name="Gocayne J.D."/>
            <person name="Amanatides P.G."/>
            <person name="Scherer S.E."/>
            <person name="Li P.W."/>
            <person name="Hoskins R.A."/>
            <person name="Galle R.F."/>
            <person name="George R.A."/>
            <person name="Lewis S.E."/>
            <person name="Richards S."/>
            <person name="Ashburner M."/>
            <person name="Henderson S.N."/>
            <person name="Sutton G.G."/>
            <person name="Wortman J.R."/>
            <person name="Yandell M.D."/>
            <person name="Zhang Q."/>
            <person name="Chen L.X."/>
            <person name="Brandon R.C."/>
            <person name="Rogers Y.-H.C."/>
            <person name="Blazej R.G."/>
            <person name="Champe M."/>
            <person name="Pfeiffer B.D."/>
            <person name="Wan K.H."/>
            <person name="Doyle C."/>
            <person name="Baxter E.G."/>
            <person name="Helt G."/>
            <person name="Nelson C.R."/>
            <person name="Miklos G.L.G."/>
            <person name="Abril J.F."/>
            <person name="Agbayani A."/>
            <person name="An H.-J."/>
            <person name="Andrews-Pfannkoch C."/>
            <person name="Baldwin D."/>
            <person name="Ballew R.M."/>
            <person name="Basu A."/>
            <person name="Baxendale J."/>
            <person name="Bayraktaroglu L."/>
            <person name="Beasley E.M."/>
            <person name="Beeson K.Y."/>
            <person name="Benos P.V."/>
            <person name="Berman B.P."/>
            <person name="Bhandari D."/>
            <person name="Bolshakov S."/>
            <person name="Borkova D."/>
            <person name="Botchan M.R."/>
            <person name="Bouck J."/>
            <person name="Brokstein P."/>
            <person name="Brottier P."/>
            <person name="Burtis K.C."/>
            <person name="Busam D.A."/>
            <person name="Butler H."/>
            <person name="Cadieu E."/>
            <person name="Center A."/>
            <person name="Chandra I."/>
            <person name="Cherry J.M."/>
            <person name="Cawley S."/>
            <person name="Dahlke C."/>
            <person name="Davenport L.B."/>
            <person name="Davies P."/>
            <person name="de Pablos B."/>
            <person name="Delcher A."/>
            <person name="Deng Z."/>
            <person name="Mays A.D."/>
            <person name="Dew I."/>
            <person name="Dietz S.M."/>
            <person name="Dodson K."/>
            <person name="Doup L.E."/>
            <person name="Downes M."/>
            <person name="Dugan-Rocha S."/>
            <person name="Dunkov B.C."/>
            <person name="Dunn P."/>
            <person name="Durbin K.J."/>
            <person name="Evangelista C.C."/>
            <person name="Ferraz C."/>
            <person name="Ferriera S."/>
            <person name="Fleischmann W."/>
            <person name="Fosler C."/>
            <person name="Gabrielian A.E."/>
            <person name="Garg N.S."/>
            <person name="Gelbart W.M."/>
            <person name="Glasser K."/>
            <person name="Glodek A."/>
            <person name="Gong F."/>
            <person name="Gorrell J.H."/>
            <person name="Gu Z."/>
            <person name="Guan P."/>
            <person name="Harris M."/>
            <person name="Harris N.L."/>
            <person name="Harvey D.A."/>
            <person name="Heiman T.J."/>
            <person name="Hernandez J.R."/>
            <person name="Houck J."/>
            <person name="Hostin D."/>
            <person name="Houston K.A."/>
            <person name="Howland T.J."/>
            <person name="Wei M.-H."/>
            <person name="Ibegwam C."/>
            <person name="Jalali M."/>
            <person name="Kalush F."/>
            <person name="Karpen G.H."/>
            <person name="Ke Z."/>
            <person name="Kennison J.A."/>
            <person name="Ketchum K.A."/>
            <person name="Kimmel B.E."/>
            <person name="Kodira C.D."/>
            <person name="Kraft C.L."/>
            <person name="Kravitz S."/>
            <person name="Kulp D."/>
            <person name="Lai Z."/>
            <person name="Lasko P."/>
            <person name="Lei Y."/>
            <person name="Levitsky A.A."/>
            <person name="Li J.H."/>
            <person name="Li Z."/>
            <person name="Liang Y."/>
            <person name="Lin X."/>
            <person name="Liu X."/>
            <person name="Mattei B."/>
            <person name="McIntosh T.C."/>
            <person name="McLeod M.P."/>
            <person name="McPherson D."/>
            <person name="Merkulov G."/>
            <person name="Milshina N.V."/>
            <person name="Mobarry C."/>
            <person name="Morris J."/>
            <person name="Moshrefi A."/>
            <person name="Mount S.M."/>
            <person name="Moy M."/>
            <person name="Murphy B."/>
            <person name="Murphy L."/>
            <person name="Muzny D.M."/>
            <person name="Nelson D.L."/>
            <person name="Nelson D.R."/>
            <person name="Nelson K.A."/>
            <person name="Nixon K."/>
            <person name="Nusskern D.R."/>
            <person name="Pacleb J.M."/>
            <person name="Palazzolo M."/>
            <person name="Pittman G.S."/>
            <person name="Pan S."/>
            <person name="Pollard J."/>
            <person name="Puri V."/>
            <person name="Reese M.G."/>
            <person name="Reinert K."/>
            <person name="Remington K."/>
            <person name="Saunders R.D.C."/>
            <person name="Scheeler F."/>
            <person name="Shen H."/>
            <person name="Shue B.C."/>
            <person name="Siden-Kiamos I."/>
            <person name="Simpson M."/>
            <person name="Skupski M.P."/>
            <person name="Smith T.J."/>
            <person name="Spier E."/>
            <person name="Spradling A.C."/>
            <person name="Stapleton M."/>
            <person name="Strong R."/>
            <person name="Sun E."/>
            <person name="Svirskas R."/>
            <person name="Tector C."/>
            <person name="Turner R."/>
            <person name="Venter E."/>
            <person name="Wang A.H."/>
            <person name="Wang X."/>
            <person name="Wang Z.-Y."/>
            <person name="Wassarman D.A."/>
            <person name="Weinstock G.M."/>
            <person name="Weissenbach J."/>
            <person name="Williams S.M."/>
            <person name="Woodage T."/>
            <person name="Worley K.C."/>
            <person name="Wu D."/>
            <person name="Yang S."/>
            <person name="Yao Q.A."/>
            <person name="Ye J."/>
            <person name="Yeh R.-F."/>
            <person name="Zaveri J.S."/>
            <person name="Zhan M."/>
            <person name="Zhang G."/>
            <person name="Zhao Q."/>
            <person name="Zheng L."/>
            <person name="Zheng X.H."/>
            <person name="Zhong F.N."/>
            <person name="Zhong W."/>
            <person name="Zhou X."/>
            <person name="Zhu S.C."/>
            <person name="Zhu X."/>
            <person name="Smith H.O."/>
            <person name="Gibbs R.A."/>
            <person name="Myers E.W."/>
            <person name="Rubin G.M."/>
            <person name="Venter J.C."/>
        </authorList>
    </citation>
    <scope>NUCLEOTIDE SEQUENCE [LARGE SCALE GENOMIC DNA]</scope>
    <source>
        <strain>Berkeley</strain>
    </source>
</reference>
<reference key="3">
    <citation type="journal article" date="2002" name="Genome Biol.">
        <title>Annotation of the Drosophila melanogaster euchromatic genome: a systematic review.</title>
        <authorList>
            <person name="Misra S."/>
            <person name="Crosby M.A."/>
            <person name="Mungall C.J."/>
            <person name="Matthews B.B."/>
            <person name="Campbell K.S."/>
            <person name="Hradecky P."/>
            <person name="Huang Y."/>
            <person name="Kaminker J.S."/>
            <person name="Millburn G.H."/>
            <person name="Prochnik S.E."/>
            <person name="Smith C.D."/>
            <person name="Tupy J.L."/>
            <person name="Whitfield E.J."/>
            <person name="Bayraktaroglu L."/>
            <person name="Berman B.P."/>
            <person name="Bettencourt B.R."/>
            <person name="Celniker S.E."/>
            <person name="de Grey A.D.N.J."/>
            <person name="Drysdale R.A."/>
            <person name="Harris N.L."/>
            <person name="Richter J."/>
            <person name="Russo S."/>
            <person name="Schroeder A.J."/>
            <person name="Shu S.Q."/>
            <person name="Stapleton M."/>
            <person name="Yamada C."/>
            <person name="Ashburner M."/>
            <person name="Gelbart W.M."/>
            <person name="Rubin G.M."/>
            <person name="Lewis S.E."/>
        </authorList>
    </citation>
    <scope>GENOME REANNOTATION</scope>
    <source>
        <strain>Berkeley</strain>
    </source>
</reference>
<reference key="4">
    <citation type="journal article" date="2002" name="Genome Biol.">
        <title>A Drosophila full-length cDNA resource.</title>
        <authorList>
            <person name="Stapleton M."/>
            <person name="Carlson J.W."/>
            <person name="Brokstein P."/>
            <person name="Yu C."/>
            <person name="Champe M."/>
            <person name="George R.A."/>
            <person name="Guarin H."/>
            <person name="Kronmiller B."/>
            <person name="Pacleb J.M."/>
            <person name="Park S."/>
            <person name="Wan K.H."/>
            <person name="Rubin G.M."/>
            <person name="Celniker S.E."/>
        </authorList>
    </citation>
    <scope>NUCLEOTIDE SEQUENCE [LARGE SCALE MRNA]</scope>
    <source>
        <strain>Berkeley</strain>
        <tissue>Embryo</tissue>
    </source>
</reference>
<reference key="5">
    <citation type="journal article" date="2004" name="Nucleic Acids Res.">
        <title>Drosophila RNase Z processes mitochondrial and nuclear pre-tRNA 3' ends in vivo.</title>
        <authorList>
            <person name="Dubrovsky E.B."/>
            <person name="Dubrovskaya V.A."/>
            <person name="Levinger L."/>
            <person name="Schiffer S."/>
            <person name="Marchfelder A."/>
        </authorList>
    </citation>
    <scope>FUNCTION</scope>
    <scope>PROBABLE SUBCELLULAR LOCATION</scope>
    <scope>DEVELOPMENTAL STAGE</scope>
</reference>
<proteinExistence type="evidence at transcript level"/>
<gene>
    <name evidence="6 8" type="primary">RNaseZ</name>
    <name evidence="5" type="synonym">JhI-1</name>
    <name evidence="8" type="ORF">CG3298</name>
</gene>
<evidence type="ECO:0000250" key="1"/>
<evidence type="ECO:0000255" key="2"/>
<evidence type="ECO:0000269" key="3">
    <source>
    </source>
</evidence>
<evidence type="ECO:0000269" key="4">
    <source>
    </source>
</evidence>
<evidence type="ECO:0000303" key="5">
    <source>
    </source>
</evidence>
<evidence type="ECO:0000303" key="6">
    <source>
    </source>
</evidence>
<evidence type="ECO:0000305" key="7"/>
<evidence type="ECO:0000312" key="8">
    <source>
        <dbReference type="FlyBase" id="FBgn0028426"/>
    </source>
</evidence>
<keyword id="KW-0217">Developmental protein</keyword>
<keyword id="KW-0255">Endonuclease</keyword>
<keyword id="KW-0378">Hydrolase</keyword>
<keyword id="KW-0479">Metal-binding</keyword>
<keyword id="KW-0496">Mitochondrion</keyword>
<keyword id="KW-0540">Nuclease</keyword>
<keyword id="KW-0539">Nucleus</keyword>
<keyword id="KW-1185">Reference proteome</keyword>
<keyword id="KW-0809">Transit peptide</keyword>
<keyword id="KW-0819">tRNA processing</keyword>
<keyword id="KW-0862">Zinc</keyword>
<name>RNZ_DROME</name>
<sequence length="766" mass="85492">MYLVKSAGSPIYRTLRTLTTSNLMAATIASAKDPLTGPRYEREPNVLRKKLASVVPGTVNLQVLGSGANGAPAAVYLFTDQARYLFNCGEGTQRLAHEHKTRLSRLEQIFLTQNTWASCGGLPGLTLTIQDAGVRDIGLHGPPHLGSMLQSMRRFVVLKNLQVRPNDCSEGACFEDSILKVDSLPLINSEDPTKSVINYICQLKPRAGALNLVKCVEQGVPPGPLLGQLKNGNDITLPDGKVVRSVDVTEASETALSFVFLDVPSENYLPALLTHGKRLKKLGEEKLTEVALVVHFTPYHISSRQVYKDFVVESFSSEAQHIYLSSPLNQFSGYAAAHRIQHQLHQLAPQVFPLLGEQLSCQSQTLSLNLKKTKLDEADSEDKANAKANETEEQGVVAMTNYHLRPRKGLDRTLESKLTPEEYVKETHAVPGFLELLAKFKEEYSFPDNSADSYPKIIFLGTGSCIPNKTRNVSSILIRTAIDAYVLLDCGEGTYGQIVRLYGHEKGQLILRQLQAIYVSHLHADHHIGLIGLLRERRQLKPRADPLILLAPRQIEPWLEFYNRQIETVEDAYTLVGNGELLASPLSGEQVERLGITSISTCLVRHCPNSFGISLTLAAKHNSEPVKITYSGDTMPCQDLIDLGRDSTVLIHEATMEDDLEEEARLKTHSTVSQAIQQGRNMNARHTILTHFSQRYAKCPRLPSDEDMQRVAIAFDNMEVTIEDLQHYHKLYPALFAMYAEYTEELEQRAVKRELKQERKRKLAET</sequence>
<organism>
    <name type="scientific">Drosophila melanogaster</name>
    <name type="common">Fruit fly</name>
    <dbReference type="NCBI Taxonomy" id="7227"/>
    <lineage>
        <taxon>Eukaryota</taxon>
        <taxon>Metazoa</taxon>
        <taxon>Ecdysozoa</taxon>
        <taxon>Arthropoda</taxon>
        <taxon>Hexapoda</taxon>
        <taxon>Insecta</taxon>
        <taxon>Pterygota</taxon>
        <taxon>Neoptera</taxon>
        <taxon>Endopterygota</taxon>
        <taxon>Diptera</taxon>
        <taxon>Brachycera</taxon>
        <taxon>Muscomorpha</taxon>
        <taxon>Ephydroidea</taxon>
        <taxon>Drosophilidae</taxon>
        <taxon>Drosophila</taxon>
        <taxon>Sophophora</taxon>
    </lineage>
</organism>
<dbReference type="EC" id="3.1.26.11"/>
<dbReference type="EMBL" id="AF215894">
    <property type="protein sequence ID" value="AAF99588.1"/>
    <property type="status" value="ALT_INIT"/>
    <property type="molecule type" value="mRNA"/>
</dbReference>
<dbReference type="EMBL" id="AE013599">
    <property type="protein sequence ID" value="AAM68783.1"/>
    <property type="molecule type" value="Genomic_DNA"/>
</dbReference>
<dbReference type="EMBL" id="AY119279">
    <property type="protein sequence ID" value="AAM51139.1"/>
    <property type="molecule type" value="mRNA"/>
</dbReference>
<dbReference type="RefSeq" id="NP_724916.1">
    <property type="nucleotide sequence ID" value="NM_165763.3"/>
</dbReference>
<dbReference type="SMR" id="Q8MKW7"/>
<dbReference type="BioGRID" id="61905">
    <property type="interactions" value="3"/>
</dbReference>
<dbReference type="FunCoup" id="Q8MKW7">
    <property type="interactions" value="2028"/>
</dbReference>
<dbReference type="IntAct" id="Q8MKW7">
    <property type="interactions" value="3"/>
</dbReference>
<dbReference type="STRING" id="7227.FBpp0087449"/>
<dbReference type="PaxDb" id="7227-FBpp0087449"/>
<dbReference type="EnsemblMetazoa" id="FBtr0088360">
    <property type="protein sequence ID" value="FBpp0087449"/>
    <property type="gene ID" value="FBgn0028426"/>
</dbReference>
<dbReference type="GeneID" id="36086"/>
<dbReference type="KEGG" id="dme:Dmel_CG3298"/>
<dbReference type="AGR" id="FB:FBgn0028426"/>
<dbReference type="CTD" id="36086"/>
<dbReference type="FlyBase" id="FBgn0028426">
    <property type="gene designation" value="RNaseZ"/>
</dbReference>
<dbReference type="VEuPathDB" id="VectorBase:FBgn0028426"/>
<dbReference type="eggNOG" id="KOG2121">
    <property type="taxonomic scope" value="Eukaryota"/>
</dbReference>
<dbReference type="GeneTree" id="ENSGT00730000111191"/>
<dbReference type="HOGENOM" id="CLU_006220_2_0_1"/>
<dbReference type="InParanoid" id="Q8MKW7"/>
<dbReference type="OrthoDB" id="527344at2759"/>
<dbReference type="PhylomeDB" id="Q8MKW7"/>
<dbReference type="BRENDA" id="3.1.26.11">
    <property type="organism ID" value="1994"/>
</dbReference>
<dbReference type="BioGRID-ORCS" id="36086">
    <property type="hits" value="1 hit in 1 CRISPR screen"/>
</dbReference>
<dbReference type="GenomeRNAi" id="36086"/>
<dbReference type="PRO" id="PR:Q8MKW7"/>
<dbReference type="Proteomes" id="UP000000803">
    <property type="component" value="Chromosome 2R"/>
</dbReference>
<dbReference type="Bgee" id="FBgn0028426">
    <property type="expression patterns" value="Expressed in fat body cell in arthropod fat body and 43 other cell types or tissues"/>
</dbReference>
<dbReference type="GO" id="GO:0005829">
    <property type="term" value="C:cytosol"/>
    <property type="evidence" value="ECO:0000314"/>
    <property type="project" value="FlyBase"/>
</dbReference>
<dbReference type="GO" id="GO:0042645">
    <property type="term" value="C:mitochondrial nucleoid"/>
    <property type="evidence" value="ECO:0000250"/>
    <property type="project" value="FlyBase"/>
</dbReference>
<dbReference type="GO" id="GO:0005739">
    <property type="term" value="C:mitochondrion"/>
    <property type="evidence" value="ECO:0000314"/>
    <property type="project" value="FlyBase"/>
</dbReference>
<dbReference type="GO" id="GO:0005634">
    <property type="term" value="C:nucleus"/>
    <property type="evidence" value="ECO:0000314"/>
    <property type="project" value="FlyBase"/>
</dbReference>
<dbReference type="GO" id="GO:0042781">
    <property type="term" value="F:3'-tRNA processing endoribonuclease activity"/>
    <property type="evidence" value="ECO:0000314"/>
    <property type="project" value="FlyBase"/>
</dbReference>
<dbReference type="GO" id="GO:0046872">
    <property type="term" value="F:metal ion binding"/>
    <property type="evidence" value="ECO:0007669"/>
    <property type="project" value="UniProtKB-KW"/>
</dbReference>
<dbReference type="GO" id="GO:0016891">
    <property type="term" value="F:RNA endonuclease activity, producing 5'-phosphomonoesters"/>
    <property type="evidence" value="ECO:0000315"/>
    <property type="project" value="UniProtKB"/>
</dbReference>
<dbReference type="GO" id="GO:0036093">
    <property type="term" value="P:germ cell proliferation"/>
    <property type="evidence" value="ECO:0000315"/>
    <property type="project" value="FlyBase"/>
</dbReference>
<dbReference type="GO" id="GO:0140040">
    <property type="term" value="P:mitochondrial polycistronic RNA processing"/>
    <property type="evidence" value="ECO:0000315"/>
    <property type="project" value="FlyBase"/>
</dbReference>
<dbReference type="GO" id="GO:1990180">
    <property type="term" value="P:mitochondrial tRNA 3'-end processing"/>
    <property type="evidence" value="ECO:0000315"/>
    <property type="project" value="FlyBase"/>
</dbReference>
<dbReference type="GO" id="GO:0030307">
    <property type="term" value="P:positive regulation of cell growth"/>
    <property type="evidence" value="ECO:0000315"/>
    <property type="project" value="FlyBase"/>
</dbReference>
<dbReference type="GO" id="GO:0045727">
    <property type="term" value="P:positive regulation of translation"/>
    <property type="evidence" value="ECO:0000315"/>
    <property type="project" value="FlyBase"/>
</dbReference>
<dbReference type="GO" id="GO:0001558">
    <property type="term" value="P:regulation of cell growth"/>
    <property type="evidence" value="ECO:0000315"/>
    <property type="project" value="FlyBase"/>
</dbReference>
<dbReference type="GO" id="GO:0042780">
    <property type="term" value="P:tRNA 3'-end processing"/>
    <property type="evidence" value="ECO:0000314"/>
    <property type="project" value="FlyBase"/>
</dbReference>
<dbReference type="GO" id="GO:0006388">
    <property type="term" value="P:tRNA splicing, via endonucleolytic cleavage and ligation"/>
    <property type="evidence" value="ECO:0000315"/>
    <property type="project" value="UniProtKB"/>
</dbReference>
<dbReference type="GO" id="GO:0007419">
    <property type="term" value="P:ventral cord development"/>
    <property type="evidence" value="ECO:0007001"/>
    <property type="project" value="FlyBase"/>
</dbReference>
<dbReference type="CDD" id="cd07718">
    <property type="entry name" value="RNaseZ_ELAC1_ELAC2-C-term-like_MBL-fold"/>
    <property type="match status" value="1"/>
</dbReference>
<dbReference type="FunFam" id="3.60.15.10:FF:000051">
    <property type="entry name" value="Ribonuclease Z, mitochondrial"/>
    <property type="match status" value="1"/>
</dbReference>
<dbReference type="FunFam" id="3.60.15.10:FF:000068">
    <property type="entry name" value="Ribonuclease Z, mitochondrial"/>
    <property type="match status" value="1"/>
</dbReference>
<dbReference type="FunFam" id="3.60.15.10:FF:000080">
    <property type="entry name" value="Ribonuclease Z, mitochondrial"/>
    <property type="match status" value="1"/>
</dbReference>
<dbReference type="Gene3D" id="3.60.15.10">
    <property type="entry name" value="Ribonuclease Z/Hydroxyacylglutathione hydrolase-like"/>
    <property type="match status" value="3"/>
</dbReference>
<dbReference type="InterPro" id="IPR001279">
    <property type="entry name" value="Metallo-B-lactamas"/>
</dbReference>
<dbReference type="InterPro" id="IPR036866">
    <property type="entry name" value="RibonucZ/Hydroxyglut_hydro"/>
</dbReference>
<dbReference type="InterPro" id="IPR047151">
    <property type="entry name" value="RNZ2-like"/>
</dbReference>
<dbReference type="InterPro" id="IPR027794">
    <property type="entry name" value="tRNase_Z_dom"/>
</dbReference>
<dbReference type="PANTHER" id="PTHR12553">
    <property type="entry name" value="ZINC PHOSPHODIESTERASE ELAC PROTEIN 2"/>
    <property type="match status" value="1"/>
</dbReference>
<dbReference type="PANTHER" id="PTHR12553:SF49">
    <property type="entry name" value="ZINC PHOSPHODIESTERASE ELAC PROTEIN 2"/>
    <property type="match status" value="1"/>
</dbReference>
<dbReference type="Pfam" id="PF12706">
    <property type="entry name" value="Lactamase_B_2"/>
    <property type="match status" value="1"/>
</dbReference>
<dbReference type="Pfam" id="PF13691">
    <property type="entry name" value="Lactamase_B_4"/>
    <property type="match status" value="1"/>
</dbReference>
<dbReference type="SUPFAM" id="SSF56281">
    <property type="entry name" value="Metallo-hydrolase/oxidoreductase"/>
    <property type="match status" value="2"/>
</dbReference>
<comment type="function">
    <text evidence="4">Zinc phosphodiesterase, which displays some tRNA 3'-processing endonuclease activity of nuclear and mitochondrial pre-tRNA. Probably involved in tRNA maturation, by removing a 3'-trailer from precursor tRNA. May participate in tRNA processing in the developing embryo.</text>
</comment>
<comment type="catalytic activity">
    <reaction>
        <text>Endonucleolytic cleavage of RNA, removing extra 3' nucleotides from tRNA precursor, generating 3' termini of tRNAs. A 3'-hydroxy group is left at the tRNA terminus and a 5'-phosphoryl group is left at the trailer molecule.</text>
        <dbReference type="EC" id="3.1.26.11"/>
    </reaction>
</comment>
<comment type="cofactor">
    <cofactor evidence="7">
        <name>Zn(2+)</name>
        <dbReference type="ChEBI" id="CHEBI:29105"/>
    </cofactor>
</comment>
<comment type="subunit">
    <text evidence="1">Homodimer.</text>
</comment>
<comment type="subcellular location">
    <subcellularLocation>
        <location evidence="7">Nucleus</location>
    </subcellularLocation>
    <subcellularLocation>
        <location evidence="7">Mitochondrion</location>
    </subcellularLocation>
</comment>
<comment type="developmental stage">
    <text evidence="4">Maternally expressed. Highly expressed in ovarian nurse cells and transferred into the nascent oocyte.</text>
</comment>
<comment type="induction">
    <text evidence="3">By juvenile hormone (JH).</text>
</comment>
<comment type="miscellaneous">
    <text>The dual subcellular location may be due to some alternative splicing and/or initiation that changes the initiator methionine.</text>
</comment>
<comment type="similarity">
    <text evidence="7">Belongs to the RNase Z family.</text>
</comment>
<comment type="sequence caution" evidence="7">
    <conflict type="erroneous initiation">
        <sequence resource="EMBL-CDS" id="AAF99588"/>
    </conflict>
</comment>